<organism>
    <name type="scientific">Picosynechococcus sp. (strain ATCC 27264 / PCC 7002 / PR-6)</name>
    <name type="common">Agmenellum quadruplicatum</name>
    <dbReference type="NCBI Taxonomy" id="32049"/>
    <lineage>
        <taxon>Bacteria</taxon>
        <taxon>Bacillati</taxon>
        <taxon>Cyanobacteriota</taxon>
        <taxon>Cyanophyceae</taxon>
        <taxon>Oscillatoriophycideae</taxon>
        <taxon>Chroococcales</taxon>
        <taxon>Geminocystaceae</taxon>
        <taxon>Picosynechococcus</taxon>
    </lineage>
</organism>
<proteinExistence type="inferred from homology"/>
<gene>
    <name evidence="1" type="primary">rpmC</name>
    <name evidence="1" type="synonym">rpl29</name>
    <name type="ordered locus">SYNPCC7002_A1057</name>
</gene>
<sequence>MPLPKIEDARKLNDQELADEIVAVKKQLFDLRLQQGTGRLEKTHEIKHARHRLALLMTVERQRQLQAQ</sequence>
<accession>B1XJT1</accession>
<name>RL29_PICP2</name>
<comment type="similarity">
    <text evidence="1">Belongs to the universal ribosomal protein uL29 family.</text>
</comment>
<dbReference type="EMBL" id="CP000951">
    <property type="protein sequence ID" value="ACA99059.1"/>
    <property type="molecule type" value="Genomic_DNA"/>
</dbReference>
<dbReference type="RefSeq" id="WP_012306682.1">
    <property type="nucleotide sequence ID" value="NZ_JAHHPU010000001.1"/>
</dbReference>
<dbReference type="SMR" id="B1XJT1"/>
<dbReference type="STRING" id="32049.SYNPCC7002_A1057"/>
<dbReference type="KEGG" id="syp:SYNPCC7002_A1057"/>
<dbReference type="eggNOG" id="COG0255">
    <property type="taxonomic scope" value="Bacteria"/>
</dbReference>
<dbReference type="HOGENOM" id="CLU_158491_0_0_3"/>
<dbReference type="Proteomes" id="UP000001688">
    <property type="component" value="Chromosome"/>
</dbReference>
<dbReference type="GO" id="GO:0022625">
    <property type="term" value="C:cytosolic large ribosomal subunit"/>
    <property type="evidence" value="ECO:0007669"/>
    <property type="project" value="TreeGrafter"/>
</dbReference>
<dbReference type="GO" id="GO:0003735">
    <property type="term" value="F:structural constituent of ribosome"/>
    <property type="evidence" value="ECO:0007669"/>
    <property type="project" value="InterPro"/>
</dbReference>
<dbReference type="GO" id="GO:0006412">
    <property type="term" value="P:translation"/>
    <property type="evidence" value="ECO:0007669"/>
    <property type="project" value="UniProtKB-UniRule"/>
</dbReference>
<dbReference type="Gene3D" id="1.10.287.310">
    <property type="match status" value="1"/>
</dbReference>
<dbReference type="HAMAP" id="MF_00374">
    <property type="entry name" value="Ribosomal_uL29"/>
    <property type="match status" value="1"/>
</dbReference>
<dbReference type="InterPro" id="IPR050063">
    <property type="entry name" value="Ribosomal_protein_uL29"/>
</dbReference>
<dbReference type="InterPro" id="IPR001854">
    <property type="entry name" value="Ribosomal_uL29"/>
</dbReference>
<dbReference type="InterPro" id="IPR036049">
    <property type="entry name" value="Ribosomal_uL29_sf"/>
</dbReference>
<dbReference type="NCBIfam" id="TIGR00012">
    <property type="entry name" value="L29"/>
    <property type="match status" value="1"/>
</dbReference>
<dbReference type="PANTHER" id="PTHR10916">
    <property type="entry name" value="60S RIBOSOMAL PROTEIN L35/50S RIBOSOMAL PROTEIN L29"/>
    <property type="match status" value="1"/>
</dbReference>
<dbReference type="PANTHER" id="PTHR10916:SF0">
    <property type="entry name" value="LARGE RIBOSOMAL SUBUNIT PROTEIN UL29C"/>
    <property type="match status" value="1"/>
</dbReference>
<dbReference type="Pfam" id="PF00831">
    <property type="entry name" value="Ribosomal_L29"/>
    <property type="match status" value="1"/>
</dbReference>
<dbReference type="SUPFAM" id="SSF46561">
    <property type="entry name" value="Ribosomal protein L29 (L29p)"/>
    <property type="match status" value="1"/>
</dbReference>
<evidence type="ECO:0000255" key="1">
    <source>
        <dbReference type="HAMAP-Rule" id="MF_00374"/>
    </source>
</evidence>
<evidence type="ECO:0000305" key="2"/>
<reference key="1">
    <citation type="submission" date="2008-02" db="EMBL/GenBank/DDBJ databases">
        <title>Complete sequence of Synechococcus sp. PCC 7002.</title>
        <authorList>
            <person name="Li T."/>
            <person name="Zhao J."/>
            <person name="Zhao C."/>
            <person name="Liu Z."/>
            <person name="Zhao F."/>
            <person name="Marquardt J."/>
            <person name="Nomura C.T."/>
            <person name="Persson S."/>
            <person name="Detter J.C."/>
            <person name="Richardson P.M."/>
            <person name="Lanz C."/>
            <person name="Schuster S.C."/>
            <person name="Wang J."/>
            <person name="Li S."/>
            <person name="Huang X."/>
            <person name="Cai T."/>
            <person name="Yu Z."/>
            <person name="Luo J."/>
            <person name="Zhao J."/>
            <person name="Bryant D.A."/>
        </authorList>
    </citation>
    <scope>NUCLEOTIDE SEQUENCE [LARGE SCALE GENOMIC DNA]</scope>
    <source>
        <strain>ATCC 27264 / PCC 7002 / PR-6</strain>
    </source>
</reference>
<keyword id="KW-1185">Reference proteome</keyword>
<keyword id="KW-0687">Ribonucleoprotein</keyword>
<keyword id="KW-0689">Ribosomal protein</keyword>
<protein>
    <recommendedName>
        <fullName evidence="1">Large ribosomal subunit protein uL29</fullName>
    </recommendedName>
    <alternativeName>
        <fullName evidence="2">50S ribosomal protein L29</fullName>
    </alternativeName>
</protein>
<feature type="chain" id="PRO_1000121828" description="Large ribosomal subunit protein uL29">
    <location>
        <begin position="1"/>
        <end position="68"/>
    </location>
</feature>